<keyword id="KW-0150">Chloroplast</keyword>
<keyword id="KW-0934">Plastid</keyword>
<keyword id="KW-0687">Ribonucleoprotein</keyword>
<keyword id="KW-0689">Ribosomal protein</keyword>
<keyword id="KW-0694">RNA-binding</keyword>
<keyword id="KW-0699">rRNA-binding</keyword>
<geneLocation type="chloroplast"/>
<feature type="chain" id="PRO_0000230757" description="Small ribosomal subunit protein uS3c">
    <location>
        <begin position="1"/>
        <end position="229"/>
    </location>
</feature>
<feature type="domain" description="KH type-2">
    <location>
        <begin position="39"/>
        <end position="128"/>
    </location>
</feature>
<organism>
    <name type="scientific">Tupiella akineta</name>
    <name type="common">Green alga</name>
    <name type="synonym">Pseudendoclonium akinetum</name>
    <dbReference type="NCBI Taxonomy" id="160070"/>
    <lineage>
        <taxon>Eukaryota</taxon>
        <taxon>Viridiplantae</taxon>
        <taxon>Chlorophyta</taxon>
        <taxon>Ulvophyceae</taxon>
        <taxon>OUU clade</taxon>
        <taxon>Ulotrichales</taxon>
        <taxon>Tupiellaceae</taxon>
        <taxon>Tupiella</taxon>
    </lineage>
</organism>
<protein>
    <recommendedName>
        <fullName evidence="2">Small ribosomal subunit protein uS3c</fullName>
    </recommendedName>
    <alternativeName>
        <fullName>30S ribosomal protein S3, chloroplastic</fullName>
    </alternativeName>
</protein>
<gene>
    <name type="primary">rps3</name>
</gene>
<accession>Q3ZJ85</accession>
<evidence type="ECO:0000250" key="1"/>
<evidence type="ECO:0000305" key="2"/>
<sequence>MGQKIHPLGFRLGITQEHRSKWYAKASDYPRLVLEDKKLRDNLFKQYPKANIVDIIIKRRQTTQDLETKESVDVIEVSIYTAVPGKIIGRSKATITELKESLEKLCQLDRMKHNLPQIRIILTILKVQNPYSSASVIADYLIEQLEQRIPFRAALKKALERIRLAKLEGIKIEISGRLNGAEIARSEWVRKGRVPLQTLRADIDYSAKTAKTIYGILGIKVWAFKGERT</sequence>
<comment type="subunit">
    <text evidence="1">Part of the 30S ribosomal subunit.</text>
</comment>
<comment type="subcellular location">
    <subcellularLocation>
        <location>Plastid</location>
        <location>Chloroplast</location>
    </subcellularLocation>
</comment>
<comment type="similarity">
    <text evidence="2">Belongs to the universal ribosomal protein uS3 family.</text>
</comment>
<name>RR3_TUPAK</name>
<dbReference type="EMBL" id="AY835431">
    <property type="protein sequence ID" value="AAV80606.1"/>
    <property type="molecule type" value="Genomic_DNA"/>
</dbReference>
<dbReference type="RefSeq" id="YP_636182.1">
    <property type="nucleotide sequence ID" value="NC_008114.1"/>
</dbReference>
<dbReference type="SMR" id="Q3ZJ85"/>
<dbReference type="GeneID" id="4108786"/>
<dbReference type="GO" id="GO:0009507">
    <property type="term" value="C:chloroplast"/>
    <property type="evidence" value="ECO:0007669"/>
    <property type="project" value="UniProtKB-SubCell"/>
</dbReference>
<dbReference type="GO" id="GO:0022627">
    <property type="term" value="C:cytosolic small ribosomal subunit"/>
    <property type="evidence" value="ECO:0007669"/>
    <property type="project" value="TreeGrafter"/>
</dbReference>
<dbReference type="GO" id="GO:0019843">
    <property type="term" value="F:rRNA binding"/>
    <property type="evidence" value="ECO:0007669"/>
    <property type="project" value="UniProtKB-UniRule"/>
</dbReference>
<dbReference type="GO" id="GO:0003735">
    <property type="term" value="F:structural constituent of ribosome"/>
    <property type="evidence" value="ECO:0007669"/>
    <property type="project" value="InterPro"/>
</dbReference>
<dbReference type="GO" id="GO:0006412">
    <property type="term" value="P:translation"/>
    <property type="evidence" value="ECO:0007669"/>
    <property type="project" value="UniProtKB-UniRule"/>
</dbReference>
<dbReference type="CDD" id="cd02412">
    <property type="entry name" value="KH-II_30S_S3"/>
    <property type="match status" value="1"/>
</dbReference>
<dbReference type="Gene3D" id="3.30.300.20">
    <property type="match status" value="1"/>
</dbReference>
<dbReference type="Gene3D" id="3.30.1140.32">
    <property type="entry name" value="Ribosomal protein S3, C-terminal domain"/>
    <property type="match status" value="1"/>
</dbReference>
<dbReference type="HAMAP" id="MF_01309_B">
    <property type="entry name" value="Ribosomal_uS3_B"/>
    <property type="match status" value="1"/>
</dbReference>
<dbReference type="InterPro" id="IPR015946">
    <property type="entry name" value="KH_dom-like_a/b"/>
</dbReference>
<dbReference type="InterPro" id="IPR004044">
    <property type="entry name" value="KH_dom_type_2"/>
</dbReference>
<dbReference type="InterPro" id="IPR009019">
    <property type="entry name" value="KH_sf_prok-type"/>
</dbReference>
<dbReference type="InterPro" id="IPR036419">
    <property type="entry name" value="Ribosomal_S3_C_sf"/>
</dbReference>
<dbReference type="InterPro" id="IPR005704">
    <property type="entry name" value="Ribosomal_uS3_bac-typ"/>
</dbReference>
<dbReference type="InterPro" id="IPR001351">
    <property type="entry name" value="Ribosomal_uS3_C"/>
</dbReference>
<dbReference type="InterPro" id="IPR018280">
    <property type="entry name" value="Ribosomal_uS3_CS"/>
</dbReference>
<dbReference type="NCBIfam" id="TIGR01009">
    <property type="entry name" value="rpsC_bact"/>
    <property type="match status" value="1"/>
</dbReference>
<dbReference type="PANTHER" id="PTHR11760">
    <property type="entry name" value="30S/40S RIBOSOMAL PROTEIN S3"/>
    <property type="match status" value="1"/>
</dbReference>
<dbReference type="PANTHER" id="PTHR11760:SF19">
    <property type="entry name" value="SMALL RIBOSOMAL SUBUNIT PROTEIN US3C"/>
    <property type="match status" value="1"/>
</dbReference>
<dbReference type="Pfam" id="PF00189">
    <property type="entry name" value="Ribosomal_S3_C"/>
    <property type="match status" value="1"/>
</dbReference>
<dbReference type="SUPFAM" id="SSF54814">
    <property type="entry name" value="Prokaryotic type KH domain (KH-domain type II)"/>
    <property type="match status" value="1"/>
</dbReference>
<dbReference type="SUPFAM" id="SSF54821">
    <property type="entry name" value="Ribosomal protein S3 C-terminal domain"/>
    <property type="match status" value="1"/>
</dbReference>
<dbReference type="PROSITE" id="PS50823">
    <property type="entry name" value="KH_TYPE_2"/>
    <property type="match status" value="1"/>
</dbReference>
<dbReference type="PROSITE" id="PS00548">
    <property type="entry name" value="RIBOSOMAL_S3"/>
    <property type="match status" value="1"/>
</dbReference>
<proteinExistence type="inferred from homology"/>
<reference key="1">
    <citation type="journal article" date="2005" name="Mol. Biol. Evol.">
        <title>The chloroplast genome sequence of the green alga Pseudendoclonium akinetum (Ulvophyceae) reveals unusual structural features and new insights into the branching order of chlorophyte lineages.</title>
        <authorList>
            <person name="Pombert J.-F."/>
            <person name="Otis C."/>
            <person name="Lemieux C."/>
            <person name="Turmel M."/>
        </authorList>
    </citation>
    <scope>NUCLEOTIDE SEQUENCE [LARGE SCALE GENOMIC DNA]</scope>
    <source>
        <strain>UTEX 1912</strain>
    </source>
</reference>